<sequence length="375" mass="41269">MSCPVIELTQQLIRRPSLSPDDAGCQALLIERLQAIGFTVERMDFADTQNFWAWRGQGETLAFAGHTDVVPPGDADRWINPPFEPTIRDGMLFGRGAADMKGSLAAMVVAAERFVAQHPNHTGRLAFLITSDEEASAHNGTVKVVEALMARNERLDYCLVGEPSSIEVVGDVVKNGRRGSLTCNLTIHGVQGHVAYPHLADNPVHRAAPFLNELVAIEWDQGNEFFPATSMQIANIQAGTGSNNVIPGELFVQFNFRFSTELTDEMIKAQVLALLEKHQLRYTVDWWLSGQPFLTARGKLVDAVVNAVEHYNEIKPQLLTTGGTSDGRFIARMGAQVVELGPVNATIHKINECVNAADLQLLARMYQRIMEQLVA</sequence>
<proteinExistence type="inferred from homology"/>
<accession>B7LCK7</accession>
<comment type="function">
    <text evidence="1">Catalyzes the hydrolysis of N-succinyl-L,L-diaminopimelic acid (SDAP), forming succinate and LL-2,6-diaminopimelate (DAP), an intermediate involved in the bacterial biosynthesis of lysine and meso-diaminopimelic acid, an essential component of bacterial cell walls.</text>
</comment>
<comment type="catalytic activity">
    <reaction evidence="1">
        <text>N-succinyl-(2S,6S)-2,6-diaminopimelate + H2O = (2S,6S)-2,6-diaminopimelate + succinate</text>
        <dbReference type="Rhea" id="RHEA:22608"/>
        <dbReference type="ChEBI" id="CHEBI:15377"/>
        <dbReference type="ChEBI" id="CHEBI:30031"/>
        <dbReference type="ChEBI" id="CHEBI:57609"/>
        <dbReference type="ChEBI" id="CHEBI:58087"/>
        <dbReference type="EC" id="3.5.1.18"/>
    </reaction>
</comment>
<comment type="cofactor">
    <cofactor evidence="1">
        <name>Zn(2+)</name>
        <dbReference type="ChEBI" id="CHEBI:29105"/>
    </cofactor>
    <cofactor evidence="1">
        <name>Co(2+)</name>
        <dbReference type="ChEBI" id="CHEBI:48828"/>
    </cofactor>
    <text evidence="1">Binds 2 Zn(2+) or Co(2+) ions per subunit.</text>
</comment>
<comment type="pathway">
    <text evidence="1">Amino-acid biosynthesis; L-lysine biosynthesis via DAP pathway; LL-2,6-diaminopimelate from (S)-tetrahydrodipicolinate (succinylase route): step 3/3.</text>
</comment>
<comment type="subunit">
    <text evidence="1">Homodimer.</text>
</comment>
<comment type="similarity">
    <text evidence="1">Belongs to the peptidase M20A family. DapE subfamily.</text>
</comment>
<gene>
    <name evidence="1" type="primary">dapE</name>
    <name type="ordered locus">EC55989_2752</name>
</gene>
<evidence type="ECO:0000255" key="1">
    <source>
        <dbReference type="HAMAP-Rule" id="MF_01690"/>
    </source>
</evidence>
<feature type="chain" id="PRO_0000375553" description="Succinyl-diaminopimelate desuccinylase">
    <location>
        <begin position="1"/>
        <end position="375"/>
    </location>
</feature>
<feature type="active site" evidence="1">
    <location>
        <position position="68"/>
    </location>
</feature>
<feature type="active site" description="Proton acceptor" evidence="1">
    <location>
        <position position="133"/>
    </location>
</feature>
<feature type="binding site" evidence="1">
    <location>
        <position position="66"/>
    </location>
    <ligand>
        <name>Zn(2+)</name>
        <dbReference type="ChEBI" id="CHEBI:29105"/>
        <label>1</label>
    </ligand>
</feature>
<feature type="binding site" evidence="1">
    <location>
        <position position="99"/>
    </location>
    <ligand>
        <name>Zn(2+)</name>
        <dbReference type="ChEBI" id="CHEBI:29105"/>
        <label>1</label>
    </ligand>
</feature>
<feature type="binding site" evidence="1">
    <location>
        <position position="99"/>
    </location>
    <ligand>
        <name>Zn(2+)</name>
        <dbReference type="ChEBI" id="CHEBI:29105"/>
        <label>2</label>
    </ligand>
</feature>
<feature type="binding site" evidence="1">
    <location>
        <position position="134"/>
    </location>
    <ligand>
        <name>Zn(2+)</name>
        <dbReference type="ChEBI" id="CHEBI:29105"/>
        <label>2</label>
    </ligand>
</feature>
<feature type="binding site" evidence="1">
    <location>
        <position position="162"/>
    </location>
    <ligand>
        <name>Zn(2+)</name>
        <dbReference type="ChEBI" id="CHEBI:29105"/>
        <label>1</label>
    </ligand>
</feature>
<feature type="binding site" evidence="1">
    <location>
        <position position="348"/>
    </location>
    <ligand>
        <name>Zn(2+)</name>
        <dbReference type="ChEBI" id="CHEBI:29105"/>
        <label>2</label>
    </ligand>
</feature>
<dbReference type="EC" id="3.5.1.18" evidence="1"/>
<dbReference type="EMBL" id="CU928145">
    <property type="protein sequence ID" value="CAU98618.1"/>
    <property type="molecule type" value="Genomic_DNA"/>
</dbReference>
<dbReference type="RefSeq" id="WP_001277801.1">
    <property type="nucleotide sequence ID" value="NC_011748.1"/>
</dbReference>
<dbReference type="SMR" id="B7LCK7"/>
<dbReference type="MEROPS" id="M20.010"/>
<dbReference type="KEGG" id="eck:EC55989_2752"/>
<dbReference type="HOGENOM" id="CLU_021802_4_0_6"/>
<dbReference type="UniPathway" id="UPA00034">
    <property type="reaction ID" value="UER00021"/>
</dbReference>
<dbReference type="Proteomes" id="UP000000746">
    <property type="component" value="Chromosome"/>
</dbReference>
<dbReference type="GO" id="GO:0008777">
    <property type="term" value="F:acetylornithine deacetylase activity"/>
    <property type="evidence" value="ECO:0007669"/>
    <property type="project" value="TreeGrafter"/>
</dbReference>
<dbReference type="GO" id="GO:0050897">
    <property type="term" value="F:cobalt ion binding"/>
    <property type="evidence" value="ECO:0007669"/>
    <property type="project" value="UniProtKB-UniRule"/>
</dbReference>
<dbReference type="GO" id="GO:0009014">
    <property type="term" value="F:succinyl-diaminopimelate desuccinylase activity"/>
    <property type="evidence" value="ECO:0007669"/>
    <property type="project" value="UniProtKB-UniRule"/>
</dbReference>
<dbReference type="GO" id="GO:0008270">
    <property type="term" value="F:zinc ion binding"/>
    <property type="evidence" value="ECO:0007669"/>
    <property type="project" value="UniProtKB-UniRule"/>
</dbReference>
<dbReference type="GO" id="GO:0019877">
    <property type="term" value="P:diaminopimelate biosynthetic process"/>
    <property type="evidence" value="ECO:0007669"/>
    <property type="project" value="UniProtKB-UniRule"/>
</dbReference>
<dbReference type="GO" id="GO:0006526">
    <property type="term" value="P:L-arginine biosynthetic process"/>
    <property type="evidence" value="ECO:0007669"/>
    <property type="project" value="TreeGrafter"/>
</dbReference>
<dbReference type="GO" id="GO:0009089">
    <property type="term" value="P:lysine biosynthetic process via diaminopimelate"/>
    <property type="evidence" value="ECO:0007669"/>
    <property type="project" value="UniProtKB-UniRule"/>
</dbReference>
<dbReference type="CDD" id="cd03891">
    <property type="entry name" value="M20_DapE_proteobac"/>
    <property type="match status" value="1"/>
</dbReference>
<dbReference type="FunFam" id="3.30.70.360:FF:000011">
    <property type="entry name" value="Succinyl-diaminopimelate desuccinylase"/>
    <property type="match status" value="1"/>
</dbReference>
<dbReference type="FunFam" id="3.40.630.10:FF:000005">
    <property type="entry name" value="Succinyl-diaminopimelate desuccinylase"/>
    <property type="match status" value="1"/>
</dbReference>
<dbReference type="FunFam" id="3.40.630.10:FF:000010">
    <property type="entry name" value="Succinyl-diaminopimelate desuccinylase"/>
    <property type="match status" value="1"/>
</dbReference>
<dbReference type="Gene3D" id="3.40.630.10">
    <property type="entry name" value="Zn peptidases"/>
    <property type="match status" value="2"/>
</dbReference>
<dbReference type="HAMAP" id="MF_01690">
    <property type="entry name" value="DapE"/>
    <property type="match status" value="1"/>
</dbReference>
<dbReference type="InterPro" id="IPR001261">
    <property type="entry name" value="ArgE/DapE_CS"/>
</dbReference>
<dbReference type="InterPro" id="IPR036264">
    <property type="entry name" value="Bact_exopeptidase_dim_dom"/>
</dbReference>
<dbReference type="InterPro" id="IPR005941">
    <property type="entry name" value="DapE_proteobac"/>
</dbReference>
<dbReference type="InterPro" id="IPR002933">
    <property type="entry name" value="Peptidase_M20"/>
</dbReference>
<dbReference type="InterPro" id="IPR011650">
    <property type="entry name" value="Peptidase_M20_dimer"/>
</dbReference>
<dbReference type="InterPro" id="IPR050072">
    <property type="entry name" value="Peptidase_M20A"/>
</dbReference>
<dbReference type="NCBIfam" id="TIGR01246">
    <property type="entry name" value="dapE_proteo"/>
    <property type="match status" value="1"/>
</dbReference>
<dbReference type="NCBIfam" id="NF009557">
    <property type="entry name" value="PRK13009.1"/>
    <property type="match status" value="1"/>
</dbReference>
<dbReference type="PANTHER" id="PTHR43808">
    <property type="entry name" value="ACETYLORNITHINE DEACETYLASE"/>
    <property type="match status" value="1"/>
</dbReference>
<dbReference type="PANTHER" id="PTHR43808:SF31">
    <property type="entry name" value="N-ACETYL-L-CITRULLINE DEACETYLASE"/>
    <property type="match status" value="1"/>
</dbReference>
<dbReference type="Pfam" id="PF07687">
    <property type="entry name" value="M20_dimer"/>
    <property type="match status" value="1"/>
</dbReference>
<dbReference type="Pfam" id="PF01546">
    <property type="entry name" value="Peptidase_M20"/>
    <property type="match status" value="1"/>
</dbReference>
<dbReference type="SUPFAM" id="SSF55031">
    <property type="entry name" value="Bacterial exopeptidase dimerisation domain"/>
    <property type="match status" value="1"/>
</dbReference>
<dbReference type="SUPFAM" id="SSF53187">
    <property type="entry name" value="Zn-dependent exopeptidases"/>
    <property type="match status" value="1"/>
</dbReference>
<dbReference type="PROSITE" id="PS00758">
    <property type="entry name" value="ARGE_DAPE_CPG2_1"/>
    <property type="match status" value="1"/>
</dbReference>
<dbReference type="PROSITE" id="PS00759">
    <property type="entry name" value="ARGE_DAPE_CPG2_2"/>
    <property type="match status" value="1"/>
</dbReference>
<keyword id="KW-0028">Amino-acid biosynthesis</keyword>
<keyword id="KW-0170">Cobalt</keyword>
<keyword id="KW-0220">Diaminopimelate biosynthesis</keyword>
<keyword id="KW-0378">Hydrolase</keyword>
<keyword id="KW-0457">Lysine biosynthesis</keyword>
<keyword id="KW-0479">Metal-binding</keyword>
<keyword id="KW-1185">Reference proteome</keyword>
<keyword id="KW-0862">Zinc</keyword>
<name>DAPE_ECO55</name>
<reference key="1">
    <citation type="journal article" date="2009" name="PLoS Genet.">
        <title>Organised genome dynamics in the Escherichia coli species results in highly diverse adaptive paths.</title>
        <authorList>
            <person name="Touchon M."/>
            <person name="Hoede C."/>
            <person name="Tenaillon O."/>
            <person name="Barbe V."/>
            <person name="Baeriswyl S."/>
            <person name="Bidet P."/>
            <person name="Bingen E."/>
            <person name="Bonacorsi S."/>
            <person name="Bouchier C."/>
            <person name="Bouvet O."/>
            <person name="Calteau A."/>
            <person name="Chiapello H."/>
            <person name="Clermont O."/>
            <person name="Cruveiller S."/>
            <person name="Danchin A."/>
            <person name="Diard M."/>
            <person name="Dossat C."/>
            <person name="Karoui M.E."/>
            <person name="Frapy E."/>
            <person name="Garry L."/>
            <person name="Ghigo J.M."/>
            <person name="Gilles A.M."/>
            <person name="Johnson J."/>
            <person name="Le Bouguenec C."/>
            <person name="Lescat M."/>
            <person name="Mangenot S."/>
            <person name="Martinez-Jehanne V."/>
            <person name="Matic I."/>
            <person name="Nassif X."/>
            <person name="Oztas S."/>
            <person name="Petit M.A."/>
            <person name="Pichon C."/>
            <person name="Rouy Z."/>
            <person name="Ruf C.S."/>
            <person name="Schneider D."/>
            <person name="Tourret J."/>
            <person name="Vacherie B."/>
            <person name="Vallenet D."/>
            <person name="Medigue C."/>
            <person name="Rocha E.P.C."/>
            <person name="Denamur E."/>
        </authorList>
    </citation>
    <scope>NUCLEOTIDE SEQUENCE [LARGE SCALE GENOMIC DNA]</scope>
    <source>
        <strain>55989 / EAEC</strain>
    </source>
</reference>
<organism>
    <name type="scientific">Escherichia coli (strain 55989 / EAEC)</name>
    <dbReference type="NCBI Taxonomy" id="585055"/>
    <lineage>
        <taxon>Bacteria</taxon>
        <taxon>Pseudomonadati</taxon>
        <taxon>Pseudomonadota</taxon>
        <taxon>Gammaproteobacteria</taxon>
        <taxon>Enterobacterales</taxon>
        <taxon>Enterobacteriaceae</taxon>
        <taxon>Escherichia</taxon>
    </lineage>
</organism>
<protein>
    <recommendedName>
        <fullName evidence="1">Succinyl-diaminopimelate desuccinylase</fullName>
        <shortName evidence="1">SDAP desuccinylase</shortName>
        <ecNumber evidence="1">3.5.1.18</ecNumber>
    </recommendedName>
    <alternativeName>
        <fullName evidence="1">N-succinyl-LL-2,6-diaminoheptanedioate amidohydrolase</fullName>
    </alternativeName>
</protein>